<proteinExistence type="inferred from homology"/>
<name>RND_DESPS</name>
<evidence type="ECO:0000255" key="1">
    <source>
        <dbReference type="HAMAP-Rule" id="MF_01899"/>
    </source>
</evidence>
<sequence length="374" mass="42417">MKQENIISTTEDLKKIVNKALKLDAVGLDTEFVWERTYYPQLGLIQIALSDEECYAIDPLSIKDLSPLGELLADRNTIKILHDAPQDLIIMSQATGATPQNIFDTRLAAGFAGSISTISLLQLVSEQLETELDKSETRTNWLKRPLTEKQLSYSLNDVRYLRATRVILLSKIIGPKIKSWLQEELNLLNNPANYSTIADESRYKKVKGVNKLDRKSIGVAQEIATWREQKARELNRPRGHVIKDDILLEIAAIRPTRPEELANTAISTKAAERYGNDICQATARALNKKEVDLPHQQKRSQLSSQEKGALAQLKELITLKCDILGIDPALLGNSNELKKIIQTLYKGKTTHMRQSFGWRKEFLKDFYQIHRDTI</sequence>
<dbReference type="EC" id="3.1.13.5" evidence="1"/>
<dbReference type="EMBL" id="CR522870">
    <property type="protein sequence ID" value="CAG37526.1"/>
    <property type="molecule type" value="Genomic_DNA"/>
</dbReference>
<dbReference type="RefSeq" id="WP_011190038.1">
    <property type="nucleotide sequence ID" value="NC_006138.1"/>
</dbReference>
<dbReference type="SMR" id="Q6AJF4"/>
<dbReference type="STRING" id="177439.DP2797"/>
<dbReference type="KEGG" id="dps:DP2797"/>
<dbReference type="eggNOG" id="COG0349">
    <property type="taxonomic scope" value="Bacteria"/>
</dbReference>
<dbReference type="HOGENOM" id="CLU_042387_0_0_7"/>
<dbReference type="OrthoDB" id="144122at2"/>
<dbReference type="Proteomes" id="UP000000602">
    <property type="component" value="Chromosome"/>
</dbReference>
<dbReference type="GO" id="GO:0005737">
    <property type="term" value="C:cytoplasm"/>
    <property type="evidence" value="ECO:0007669"/>
    <property type="project" value="UniProtKB-SubCell"/>
</dbReference>
<dbReference type="GO" id="GO:0008408">
    <property type="term" value="F:3'-5' exonuclease activity"/>
    <property type="evidence" value="ECO:0007669"/>
    <property type="project" value="InterPro"/>
</dbReference>
<dbReference type="GO" id="GO:0003676">
    <property type="term" value="F:nucleic acid binding"/>
    <property type="evidence" value="ECO:0007669"/>
    <property type="project" value="InterPro"/>
</dbReference>
<dbReference type="GO" id="GO:0000166">
    <property type="term" value="F:nucleotide binding"/>
    <property type="evidence" value="ECO:0007669"/>
    <property type="project" value="InterPro"/>
</dbReference>
<dbReference type="GO" id="GO:0033890">
    <property type="term" value="F:ribonuclease D activity"/>
    <property type="evidence" value="ECO:0007669"/>
    <property type="project" value="UniProtKB-UniRule"/>
</dbReference>
<dbReference type="GO" id="GO:0042780">
    <property type="term" value="P:tRNA 3'-end processing"/>
    <property type="evidence" value="ECO:0007669"/>
    <property type="project" value="UniProtKB-UniRule"/>
</dbReference>
<dbReference type="CDD" id="cd06142">
    <property type="entry name" value="RNaseD_exo"/>
    <property type="match status" value="1"/>
</dbReference>
<dbReference type="Gene3D" id="1.10.150.80">
    <property type="entry name" value="HRDC domain"/>
    <property type="match status" value="1"/>
</dbReference>
<dbReference type="Gene3D" id="3.30.420.10">
    <property type="entry name" value="Ribonuclease H-like superfamily/Ribonuclease H"/>
    <property type="match status" value="1"/>
</dbReference>
<dbReference type="HAMAP" id="MF_01899">
    <property type="entry name" value="RNase_D"/>
    <property type="match status" value="1"/>
</dbReference>
<dbReference type="InterPro" id="IPR002562">
    <property type="entry name" value="3'-5'_exonuclease_dom"/>
</dbReference>
<dbReference type="InterPro" id="IPR010997">
    <property type="entry name" value="HRDC-like_sf"/>
</dbReference>
<dbReference type="InterPro" id="IPR002121">
    <property type="entry name" value="HRDC_dom"/>
</dbReference>
<dbReference type="InterPro" id="IPR044876">
    <property type="entry name" value="HRDC_dom_sf"/>
</dbReference>
<dbReference type="InterPro" id="IPR006292">
    <property type="entry name" value="RNase_D"/>
</dbReference>
<dbReference type="InterPro" id="IPR051086">
    <property type="entry name" value="RNase_D-like"/>
</dbReference>
<dbReference type="InterPro" id="IPR012337">
    <property type="entry name" value="RNaseH-like_sf"/>
</dbReference>
<dbReference type="InterPro" id="IPR036397">
    <property type="entry name" value="RNaseH_sf"/>
</dbReference>
<dbReference type="NCBIfam" id="TIGR01388">
    <property type="entry name" value="rnd"/>
    <property type="match status" value="1"/>
</dbReference>
<dbReference type="PANTHER" id="PTHR47649">
    <property type="entry name" value="RIBONUCLEASE D"/>
    <property type="match status" value="1"/>
</dbReference>
<dbReference type="PANTHER" id="PTHR47649:SF1">
    <property type="entry name" value="RIBONUCLEASE D"/>
    <property type="match status" value="1"/>
</dbReference>
<dbReference type="Pfam" id="PF01612">
    <property type="entry name" value="DNA_pol_A_exo1"/>
    <property type="match status" value="1"/>
</dbReference>
<dbReference type="Pfam" id="PF00570">
    <property type="entry name" value="HRDC"/>
    <property type="match status" value="1"/>
</dbReference>
<dbReference type="SMART" id="SM00474">
    <property type="entry name" value="35EXOc"/>
    <property type="match status" value="1"/>
</dbReference>
<dbReference type="SUPFAM" id="SSF47819">
    <property type="entry name" value="HRDC-like"/>
    <property type="match status" value="2"/>
</dbReference>
<dbReference type="SUPFAM" id="SSF53098">
    <property type="entry name" value="Ribonuclease H-like"/>
    <property type="match status" value="1"/>
</dbReference>
<dbReference type="PROSITE" id="PS50967">
    <property type="entry name" value="HRDC"/>
    <property type="match status" value="1"/>
</dbReference>
<gene>
    <name evidence="1" type="primary">rnd</name>
    <name type="ordered locus">DP2797</name>
</gene>
<protein>
    <recommendedName>
        <fullName evidence="1">Ribonuclease D</fullName>
        <shortName evidence="1">RNase D</shortName>
        <ecNumber evidence="1">3.1.13.5</ecNumber>
    </recommendedName>
</protein>
<feature type="chain" id="PRO_0000411061" description="Ribonuclease D">
    <location>
        <begin position="1"/>
        <end position="374"/>
    </location>
</feature>
<feature type="domain" description="3'-5' exonuclease" evidence="1">
    <location>
        <begin position="6"/>
        <end position="171"/>
    </location>
</feature>
<feature type="domain" description="HRDC" evidence="1">
    <location>
        <begin position="213"/>
        <end position="292"/>
    </location>
</feature>
<accession>Q6AJF4</accession>
<comment type="function">
    <text evidence="1">Exonuclease involved in the 3' processing of various precursor tRNAs. Initiates hydrolysis at the 3'-terminus of an RNA molecule and releases 5'-mononucleotides.</text>
</comment>
<comment type="catalytic activity">
    <reaction evidence="1">
        <text>Exonucleolytic cleavage that removes extra residues from the 3'-terminus of tRNA to produce 5'-mononucleotides.</text>
        <dbReference type="EC" id="3.1.13.5"/>
    </reaction>
</comment>
<comment type="cofactor">
    <cofactor evidence="1">
        <name>a divalent metal cation</name>
        <dbReference type="ChEBI" id="CHEBI:60240"/>
    </cofactor>
</comment>
<comment type="subcellular location">
    <subcellularLocation>
        <location evidence="1">Cytoplasm</location>
    </subcellularLocation>
</comment>
<comment type="similarity">
    <text evidence="1">Belongs to the RNase D family.</text>
</comment>
<keyword id="KW-0963">Cytoplasm</keyword>
<keyword id="KW-0269">Exonuclease</keyword>
<keyword id="KW-0378">Hydrolase</keyword>
<keyword id="KW-0540">Nuclease</keyword>
<keyword id="KW-1185">Reference proteome</keyword>
<keyword id="KW-0819">tRNA processing</keyword>
<organism>
    <name type="scientific">Desulfotalea psychrophila (strain LSv54 / DSM 12343)</name>
    <dbReference type="NCBI Taxonomy" id="177439"/>
    <lineage>
        <taxon>Bacteria</taxon>
        <taxon>Pseudomonadati</taxon>
        <taxon>Thermodesulfobacteriota</taxon>
        <taxon>Desulfobulbia</taxon>
        <taxon>Desulfobulbales</taxon>
        <taxon>Desulfocapsaceae</taxon>
        <taxon>Desulfotalea</taxon>
    </lineage>
</organism>
<reference key="1">
    <citation type="journal article" date="2004" name="Environ. Microbiol.">
        <title>The genome of Desulfotalea psychrophila, a sulfate-reducing bacterium from permanently cold Arctic sediments.</title>
        <authorList>
            <person name="Rabus R."/>
            <person name="Ruepp A."/>
            <person name="Frickey T."/>
            <person name="Rattei T."/>
            <person name="Fartmann B."/>
            <person name="Stark M."/>
            <person name="Bauer M."/>
            <person name="Zibat A."/>
            <person name="Lombardot T."/>
            <person name="Becker I."/>
            <person name="Amann J."/>
            <person name="Gellner K."/>
            <person name="Teeling H."/>
            <person name="Leuschner W.D."/>
            <person name="Gloeckner F.-O."/>
            <person name="Lupas A.N."/>
            <person name="Amann R."/>
            <person name="Klenk H.-P."/>
        </authorList>
    </citation>
    <scope>NUCLEOTIDE SEQUENCE [LARGE SCALE GENOMIC DNA]</scope>
    <source>
        <strain>DSM 12343 / LSv54</strain>
    </source>
</reference>